<accession>R4HZ96</accession>
<accession>A0A396JPB4</accession>
<evidence type="ECO:0000250" key="1">
    <source>
        <dbReference type="UniProtKB" id="C7AU21"/>
    </source>
</evidence>
<evidence type="ECO:0000255" key="2"/>
<evidence type="ECO:0000269" key="3">
    <source>
    </source>
</evidence>
<evidence type="ECO:0000269" key="4">
    <source>
    </source>
</evidence>
<evidence type="ECO:0000303" key="5">
    <source>
    </source>
</evidence>
<evidence type="ECO:0000305" key="6"/>
<evidence type="ECO:0000312" key="7">
    <source>
        <dbReference type="EMBL" id="KEH42623.1"/>
    </source>
</evidence>
<dbReference type="EC" id="5.2.1.14" evidence="4"/>
<dbReference type="EMBL" id="JN629088">
    <property type="protein sequence ID" value="AEW07379.1"/>
    <property type="molecule type" value="Genomic_DNA"/>
</dbReference>
<dbReference type="EMBL" id="CM001217">
    <property type="protein sequence ID" value="KEH42623.1"/>
    <property type="molecule type" value="Genomic_DNA"/>
</dbReference>
<dbReference type="EMBL" id="PSQE01000001">
    <property type="protein sequence ID" value="RHN80129.1"/>
    <property type="status" value="ALT_INIT"/>
    <property type="molecule type" value="Genomic_DNA"/>
</dbReference>
<dbReference type="RefSeq" id="XP_013468586.1">
    <property type="nucleotide sequence ID" value="XM_013613132.1"/>
</dbReference>
<dbReference type="STRING" id="3880.R4HZ96"/>
<dbReference type="GeneID" id="25485781"/>
<dbReference type="KEGG" id="mtr:25485781"/>
<dbReference type="HOGENOM" id="CLU_076741_0_2_1"/>
<dbReference type="OrthoDB" id="416096at2759"/>
<dbReference type="BRENDA" id="5.2.1.14">
    <property type="organism ID" value="3201"/>
</dbReference>
<dbReference type="Proteomes" id="UP000002051">
    <property type="component" value="Chromosome 1"/>
</dbReference>
<dbReference type="Proteomes" id="UP000265566">
    <property type="component" value="Chromosome 1"/>
</dbReference>
<dbReference type="GO" id="GO:0009507">
    <property type="term" value="C:chloroplast"/>
    <property type="evidence" value="ECO:0007669"/>
    <property type="project" value="UniProtKB-SubCell"/>
</dbReference>
<dbReference type="GO" id="GO:0106365">
    <property type="term" value="F:beta-carotene isomerase activity"/>
    <property type="evidence" value="ECO:0007669"/>
    <property type="project" value="UniProtKB-EC"/>
</dbReference>
<dbReference type="GO" id="GO:0005506">
    <property type="term" value="F:iron ion binding"/>
    <property type="evidence" value="ECO:0007669"/>
    <property type="project" value="InterPro"/>
</dbReference>
<dbReference type="InterPro" id="IPR038938">
    <property type="entry name" value="D27-like"/>
</dbReference>
<dbReference type="InterPro" id="IPR025114">
    <property type="entry name" value="D27-like_C"/>
</dbReference>
<dbReference type="PANTHER" id="PTHR33591">
    <property type="entry name" value="BETA-CAROTENE ISOMERASE D27"/>
    <property type="match status" value="1"/>
</dbReference>
<dbReference type="PANTHER" id="PTHR33591:SF1">
    <property type="entry name" value="BETA-CAROTENE ISOMERASE D27, CHLOROPLASTIC"/>
    <property type="match status" value="1"/>
</dbReference>
<dbReference type="Pfam" id="PF13225">
    <property type="entry name" value="D27-like_C"/>
    <property type="match status" value="1"/>
</dbReference>
<sequence>MDSKMIAHNMSLTPTLAQWKKLRLKPKHTFVVGVLARPTDDISEETLRKTNVYKDNWFDKLAINHLSKSVQAATGISNNKSGFDSLVEAATVASQKFNTTQQQGIILDALDRAFPKPILSVIRRVMPPSKLAREYFAVFTTIFFAWLLGPSEVRESEINGRREKNIVHIKKCRFLEETNCVGMCINLCKMPSQLFIKDSFGMPVNMVPNFDDMSCEMIFGQEPPASTDDPALKQPCYKLCKAKKNHATQCLS</sequence>
<name>D27_MEDTR</name>
<keyword id="KW-0150">Chloroplast</keyword>
<keyword id="KW-0408">Iron</keyword>
<keyword id="KW-0413">Isomerase</keyword>
<keyword id="KW-0479">Metal-binding</keyword>
<keyword id="KW-0934">Plastid</keyword>
<keyword id="KW-1185">Reference proteome</keyword>
<keyword id="KW-0809">Transit peptide</keyword>
<comment type="function">
    <text evidence="4">Involved in strigolactones biosynthesis by catalyzing the isomerization of the C9-C10 double bond in all-trans-beta-carotene leading to 9-cis-beta-carotene and providing the substrate for CCD7 (PubMed:26503135). Strigolactones are hormones that inhibit tillering and shoot branching through the MAX-dependent pathway, contribute to the regulation of shoot architectural response to phosphate-limiting conditions and function as rhizosphere signals that stimulate hyphal branching of arbuscular mycorrhizal fungi and trigger seed germination of root parasitic weeds (PubMed:26503135).</text>
</comment>
<comment type="catalytic activity">
    <reaction evidence="4">
        <text>all-trans-beta-carotene = 9-cis-beta-carotene</text>
        <dbReference type="Rhea" id="RHEA:34455"/>
        <dbReference type="ChEBI" id="CHEBI:17579"/>
        <dbReference type="ChEBI" id="CHEBI:67188"/>
        <dbReference type="EC" id="5.2.1.14"/>
    </reaction>
    <physiologicalReaction direction="left-to-right" evidence="4">
        <dbReference type="Rhea" id="RHEA:34456"/>
    </physiologicalReaction>
</comment>
<comment type="cofactor">
    <cofactor evidence="1">
        <name>Fe cation</name>
        <dbReference type="ChEBI" id="CHEBI:24875"/>
    </cofactor>
</comment>
<comment type="subcellular location">
    <subcellularLocation>
        <location evidence="1">Plastid</location>
        <location evidence="1">Chloroplast</location>
    </subcellularLocation>
</comment>
<comment type="tissue specificity">
    <text evidence="3">Highly expressed in roots (PubMed:22039214). Expressed at low levels in leaves and stems (PubMed:22039214).</text>
</comment>
<comment type="induction">
    <text evidence="3 4">Induced by phosphate deprivation (PubMed:22039214, PubMed:26503135). Induced by Rhizobium lipo-chitooligosaccharide elicitors (PubMed:26503135).</text>
</comment>
<comment type="miscellaneous">
    <text evidence="4">Roots of plants silencing D27 exhibit a strong reduction in strigolactone synthesis.</text>
</comment>
<comment type="sequence caution" evidence="6">
    <conflict type="erroneous initiation">
        <sequence resource="EMBL-CDS" id="RHN80129"/>
    </conflict>
    <text>Extended N-terminus.</text>
</comment>
<proteinExistence type="evidence at protein level"/>
<organism>
    <name type="scientific">Medicago truncatula</name>
    <name type="common">Barrel medic</name>
    <name type="synonym">Medicago tribuloides</name>
    <dbReference type="NCBI Taxonomy" id="3880"/>
    <lineage>
        <taxon>Eukaryota</taxon>
        <taxon>Viridiplantae</taxon>
        <taxon>Streptophyta</taxon>
        <taxon>Embryophyta</taxon>
        <taxon>Tracheophyta</taxon>
        <taxon>Spermatophyta</taxon>
        <taxon>Magnoliopsida</taxon>
        <taxon>eudicotyledons</taxon>
        <taxon>Gunneridae</taxon>
        <taxon>Pentapetalae</taxon>
        <taxon>rosids</taxon>
        <taxon>fabids</taxon>
        <taxon>Fabales</taxon>
        <taxon>Fabaceae</taxon>
        <taxon>Papilionoideae</taxon>
        <taxon>50 kb inversion clade</taxon>
        <taxon>NPAAA clade</taxon>
        <taxon>Hologalegina</taxon>
        <taxon>IRL clade</taxon>
        <taxon>Trifolieae</taxon>
        <taxon>Medicago</taxon>
    </lineage>
</organism>
<reference key="1">
    <citation type="journal article" date="2011" name="Plant Cell">
        <title>Strigolactone biosynthesis in Medicago truncatula and rice requires the symbiotic GRAS-type transcription factors NSP1 and NSP2.</title>
        <authorList>
            <person name="Liu W."/>
            <person name="Kohlen W."/>
            <person name="Lillo A."/>
            <person name="Op den Camp R."/>
            <person name="Ivanov S."/>
            <person name="Hartog M."/>
            <person name="Limpens E."/>
            <person name="Jamil M."/>
            <person name="Smaczniak C."/>
            <person name="Kaufmann K."/>
            <person name="Yang W.C."/>
            <person name="Hooiveld G.J."/>
            <person name="Charnikhova T."/>
            <person name="Bouwmeester H.J."/>
            <person name="Bisseling T."/>
            <person name="Geurts R."/>
        </authorList>
    </citation>
    <scope>NUCLEOTIDE SEQUENCE [GENOMIC DNA]</scope>
    <scope>TISSUE SPECIFICITY</scope>
    <scope>INDUCTION BY PHOSPHATE DEPRIVATION</scope>
</reference>
<reference key="2">
    <citation type="journal article" date="2011" name="Nature">
        <title>The Medicago genome provides insight into the evolution of rhizobial symbioses.</title>
        <authorList>
            <person name="Young N.D."/>
            <person name="Debelle F."/>
            <person name="Oldroyd G.E.D."/>
            <person name="Geurts R."/>
            <person name="Cannon S.B."/>
            <person name="Udvardi M.K."/>
            <person name="Benedito V.A."/>
            <person name="Mayer K.F.X."/>
            <person name="Gouzy J."/>
            <person name="Schoof H."/>
            <person name="Van de Peer Y."/>
            <person name="Proost S."/>
            <person name="Cook D.R."/>
            <person name="Meyers B.C."/>
            <person name="Spannagl M."/>
            <person name="Cheung F."/>
            <person name="De Mita S."/>
            <person name="Krishnakumar V."/>
            <person name="Gundlach H."/>
            <person name="Zhou S."/>
            <person name="Mudge J."/>
            <person name="Bharti A.K."/>
            <person name="Murray J.D."/>
            <person name="Naoumkina M.A."/>
            <person name="Rosen B."/>
            <person name="Silverstein K.A.T."/>
            <person name="Tang H."/>
            <person name="Rombauts S."/>
            <person name="Zhao P.X."/>
            <person name="Zhou P."/>
            <person name="Barbe V."/>
            <person name="Bardou P."/>
            <person name="Bechner M."/>
            <person name="Bellec A."/>
            <person name="Berger A."/>
            <person name="Berges H."/>
            <person name="Bidwell S."/>
            <person name="Bisseling T."/>
            <person name="Choisne N."/>
            <person name="Couloux A."/>
            <person name="Denny R."/>
            <person name="Deshpande S."/>
            <person name="Dai X."/>
            <person name="Doyle J.J."/>
            <person name="Dudez A.-M."/>
            <person name="Farmer A.D."/>
            <person name="Fouteau S."/>
            <person name="Franken C."/>
            <person name="Gibelin C."/>
            <person name="Gish J."/>
            <person name="Goldstein S."/>
            <person name="Gonzalez A.J."/>
            <person name="Green P.J."/>
            <person name="Hallab A."/>
            <person name="Hartog M."/>
            <person name="Hua A."/>
            <person name="Humphray S.J."/>
            <person name="Jeong D.-H."/>
            <person name="Jing Y."/>
            <person name="Jocker A."/>
            <person name="Kenton S.M."/>
            <person name="Kim D.-J."/>
            <person name="Klee K."/>
            <person name="Lai H."/>
            <person name="Lang C."/>
            <person name="Lin S."/>
            <person name="Macmil S.L."/>
            <person name="Magdelenat G."/>
            <person name="Matthews L."/>
            <person name="McCorrison J."/>
            <person name="Monaghan E.L."/>
            <person name="Mun J.-H."/>
            <person name="Najar F.Z."/>
            <person name="Nicholson C."/>
            <person name="Noirot C."/>
            <person name="O'Bleness M."/>
            <person name="Paule C.R."/>
            <person name="Poulain J."/>
            <person name="Prion F."/>
            <person name="Qin B."/>
            <person name="Qu C."/>
            <person name="Retzel E.F."/>
            <person name="Riddle C."/>
            <person name="Sallet E."/>
            <person name="Samain S."/>
            <person name="Samson N."/>
            <person name="Sanders I."/>
            <person name="Saurat O."/>
            <person name="Scarpelli C."/>
            <person name="Schiex T."/>
            <person name="Segurens B."/>
            <person name="Severin A.J."/>
            <person name="Sherrier D.J."/>
            <person name="Shi R."/>
            <person name="Sims S."/>
            <person name="Singer S.R."/>
            <person name="Sinharoy S."/>
            <person name="Sterck L."/>
            <person name="Viollet A."/>
            <person name="Wang B.-B."/>
            <person name="Wang K."/>
            <person name="Wang M."/>
            <person name="Wang X."/>
            <person name="Warfsmann J."/>
            <person name="Weissenbach J."/>
            <person name="White D.D."/>
            <person name="White J.D."/>
            <person name="Wiley G.B."/>
            <person name="Wincker P."/>
            <person name="Xing Y."/>
            <person name="Yang L."/>
            <person name="Yao Z."/>
            <person name="Ying F."/>
            <person name="Zhai J."/>
            <person name="Zhou L."/>
            <person name="Zuber A."/>
            <person name="Denarie J."/>
            <person name="Dixon R.A."/>
            <person name="May G.D."/>
            <person name="Schwartz D.C."/>
            <person name="Rogers J."/>
            <person name="Quetier F."/>
            <person name="Town C.D."/>
            <person name="Roe B.A."/>
        </authorList>
    </citation>
    <scope>NUCLEOTIDE SEQUENCE [LARGE SCALE GENOMIC DNA]</scope>
    <scope>IDENTIFICATION</scope>
    <source>
        <strain>cv. Jemalong A17</strain>
    </source>
</reference>
<reference key="3">
    <citation type="journal article" date="2014" name="BMC Genomics">
        <title>An improved genome release (version Mt4.0) for the model legume Medicago truncatula.</title>
        <authorList>
            <person name="Tang H."/>
            <person name="Krishnakumar V."/>
            <person name="Bidwell S."/>
            <person name="Rosen B."/>
            <person name="Chan A."/>
            <person name="Zhou S."/>
            <person name="Gentzbittel L."/>
            <person name="Childs K.L."/>
            <person name="Yandell M."/>
            <person name="Gundlach H."/>
            <person name="Mayer K.F."/>
            <person name="Schwartz D.C."/>
            <person name="Town C.D."/>
        </authorList>
    </citation>
    <scope>GENOME REANNOTATION</scope>
    <source>
        <strain>cv. Jemalong A17</strain>
    </source>
</reference>
<reference key="4">
    <citation type="journal article" date="2018" name="Nat. Plants">
        <title>Whole-genome landscape of Medicago truncatula symbiotic genes.</title>
        <authorList>
            <person name="Pecrix Y."/>
            <person name="Staton S.E."/>
            <person name="Sallet E."/>
            <person name="Lelandais-Briere C."/>
            <person name="Moreau S."/>
            <person name="Carrere S."/>
            <person name="Blein T."/>
            <person name="Jardinaud M.F."/>
            <person name="Latrasse D."/>
            <person name="Zouine M."/>
            <person name="Zahm M."/>
            <person name="Kreplak J."/>
            <person name="Mayjonade B."/>
            <person name="Satge C."/>
            <person name="Perez M."/>
            <person name="Cauet S."/>
            <person name="Marande W."/>
            <person name="Chantry-Darmon C."/>
            <person name="Lopez-Roques C."/>
            <person name="Bouchez O."/>
            <person name="Berard A."/>
            <person name="Debelle F."/>
            <person name="Munos S."/>
            <person name="Bendahmane A."/>
            <person name="Berges H."/>
            <person name="Niebel A."/>
            <person name="Buitink J."/>
            <person name="Frugier F."/>
            <person name="Benhamed M."/>
            <person name="Crespi M."/>
            <person name="Gouzy J."/>
            <person name="Gamas P."/>
        </authorList>
    </citation>
    <scope>NUCLEOTIDE SEQUENCE [LARGE SCALE GENOMIC DNA]</scope>
    <source>
        <strain>cv. Jemalong A17</strain>
    </source>
</reference>
<reference key="5">
    <citation type="journal article" date="2015" name="BMC Plant Biol.">
        <title>The strigolactone biosynthesis gene DWARF27 is co-opted in rhizobium symbiosis.</title>
        <authorList>
            <person name="van Zeijl A."/>
            <person name="Liu W."/>
            <person name="Xiao T.T."/>
            <person name="Kohlen W."/>
            <person name="Yang W.C."/>
            <person name="Bisseling T."/>
            <person name="Geurts R."/>
        </authorList>
    </citation>
    <scope>FUNCTION</scope>
    <scope>CATALYTIC ACTIVITY</scope>
    <scope>TISSUE SPECIFICITY</scope>
    <scope>INDUCTION</scope>
</reference>
<feature type="transit peptide" description="Chloroplast" evidence="2">
    <location>
        <begin position="1"/>
        <end position="43"/>
    </location>
</feature>
<feature type="chain" id="PRO_0000448275" description="Beta-carotene isomerase D27, chloroplastic">
    <location>
        <begin position="44"/>
        <end position="252"/>
    </location>
</feature>
<gene>
    <name evidence="5" type="primary">D27</name>
    <name evidence="7" type="ordered locus">MTR_1g471050</name>
</gene>
<protein>
    <recommendedName>
        <fullName evidence="6">Beta-carotene isomerase D27, chloroplastic</fullName>
        <ecNumber evidence="4">5.2.1.14</ecNumber>
    </recommendedName>
    <alternativeName>
        <fullName evidence="6">Protein DWARF-27</fullName>
    </alternativeName>
</protein>